<comment type="function">
    <text evidence="2 5 6 9 10">The phage shock protein (psp) operon (pspABCDE) may play a significant role in the competition for survival under nutrient- or energy-limited conditions. PspA negatively regulates expression of the pspABCDE promoter and of pspG through negative regulation of the psp-specific transcriptional activator PspF. Is also required for membrane integrity, efficient translocation and maintenance of the proton motive force.</text>
</comment>
<comment type="subunit">
    <text evidence="3 4 9">Exists in at least two different oligomeric assemblies. Regulatory function involves the formation of a complex with PspF, which is composed of around 6 PspF subunits and 6 PspA subunits. Maintenance of membrane integrity involves the formation of a 36-mer ring complex. Interacts with PspB and PspC.</text>
</comment>
<comment type="interaction">
    <interactant intactId="EBI-1123459">
        <id>P0AFM6</id>
    </interactant>
    <interactant intactId="EBI-1123459">
        <id>P0AFM6</id>
        <label>pspA</label>
    </interactant>
    <organismsDiffer>false</organismsDiffer>
    <experiments>5</experiments>
</comment>
<comment type="interaction">
    <interactant intactId="EBI-1123459">
        <id>P0AFM6</id>
    </interactant>
    <interactant intactId="EBI-1134561">
        <id>P0AFN2</id>
        <label>pspC</label>
    </interactant>
    <organismsDiffer>false</organismsDiffer>
    <experiments>9</experiments>
</comment>
<comment type="interaction">
    <interactant intactId="EBI-1123459">
        <id>P0AFM6</id>
    </interactant>
    <interactant intactId="EBI-1123431">
        <id>P37344</id>
        <label>pspF</label>
    </interactant>
    <organismsDiffer>false</organismsDiffer>
    <experiments>6</experiments>
</comment>
<comment type="subcellular location">
    <subcellularLocation>
        <location evidence="8">Cytoplasm</location>
    </subcellularLocation>
    <subcellularLocation>
        <location evidence="8">Cell inner membrane</location>
        <topology evidence="8">Peripheral membrane protein</topology>
        <orientation evidence="8">Cytoplasmic side</orientation>
    </subcellularLocation>
    <text>Localizes at both cell poles and along the length of the cell.</text>
</comment>
<comment type="induction">
    <text evidence="6 7">By heat, ethanol, osmotic shock and infection by filamentous bacteriophages (PubMed:1712397). Induced during contact-dependent growth inhibition (CDI), but not during recovery from CDI (PubMed:19124575).</text>
</comment>
<comment type="domain">
    <text evidence="9">All four putative helical domains of PspA are critical for the formation of the 36-mer. In contrast, not all four helical domains are required for the formation of the inhibitory PspA-PspF complex.</text>
</comment>
<comment type="disruption phenotype">
    <text evidence="7">Not required for induction of, or recovery from, contact-dependent growth inhibition (CDI).</text>
</comment>
<comment type="similarity">
    <text evidence="12">Belongs to the PspA/Vipp/IM30 family.</text>
</comment>
<proteinExistence type="evidence at protein level"/>
<gene>
    <name type="primary">pspA</name>
    <name type="ordered locus">b1304</name>
    <name type="ordered locus">JW1297</name>
</gene>
<reference key="1">
    <citation type="journal article" date="1991" name="J. Mol. Biol.">
        <title>Characterization and sequence of the Escherichia coli stress-induced psp operon.</title>
        <authorList>
            <person name="Brissette J.L."/>
            <person name="Weiner L."/>
            <person name="Ripmaster T.L."/>
            <person name="Model P."/>
        </authorList>
    </citation>
    <scope>NUCLEOTIDE SEQUENCE [GENOMIC DNA]</scope>
    <scope>PARTIAL PROTEIN SEQUENCE</scope>
    <scope>FUNCTION</scope>
    <scope>INDUCTION</scope>
    <source>
        <strain>K12</strain>
    </source>
</reference>
<reference key="2">
    <citation type="journal article" date="1996" name="DNA Res.">
        <title>A 570-kb DNA sequence of the Escherichia coli K-12 genome corresponding to the 28.0-40.1 min region on the linkage map.</title>
        <authorList>
            <person name="Aiba H."/>
            <person name="Baba T."/>
            <person name="Fujita K."/>
            <person name="Hayashi K."/>
            <person name="Inada T."/>
            <person name="Isono K."/>
            <person name="Itoh T."/>
            <person name="Kasai H."/>
            <person name="Kashimoto K."/>
            <person name="Kimura S."/>
            <person name="Kitakawa M."/>
            <person name="Kitagawa M."/>
            <person name="Makino K."/>
            <person name="Miki T."/>
            <person name="Mizobuchi K."/>
            <person name="Mori H."/>
            <person name="Mori T."/>
            <person name="Motomura K."/>
            <person name="Nakade S."/>
            <person name="Nakamura Y."/>
            <person name="Nashimoto H."/>
            <person name="Nishio Y."/>
            <person name="Oshima T."/>
            <person name="Saito N."/>
            <person name="Sampei G."/>
            <person name="Seki Y."/>
            <person name="Sivasundaram S."/>
            <person name="Tagami H."/>
            <person name="Takeda J."/>
            <person name="Takemoto K."/>
            <person name="Takeuchi Y."/>
            <person name="Wada C."/>
            <person name="Yamamoto Y."/>
            <person name="Horiuchi T."/>
        </authorList>
    </citation>
    <scope>NUCLEOTIDE SEQUENCE [LARGE SCALE GENOMIC DNA]</scope>
    <source>
        <strain>K12 / W3110 / ATCC 27325 / DSM 5911</strain>
    </source>
</reference>
<reference key="3">
    <citation type="journal article" date="1997" name="Science">
        <title>The complete genome sequence of Escherichia coli K-12.</title>
        <authorList>
            <person name="Blattner F.R."/>
            <person name="Plunkett G. III"/>
            <person name="Bloch C.A."/>
            <person name="Perna N.T."/>
            <person name="Burland V."/>
            <person name="Riley M."/>
            <person name="Collado-Vides J."/>
            <person name="Glasner J.D."/>
            <person name="Rode C.K."/>
            <person name="Mayhew G.F."/>
            <person name="Gregor J."/>
            <person name="Davis N.W."/>
            <person name="Kirkpatrick H.A."/>
            <person name="Goeden M.A."/>
            <person name="Rose D.J."/>
            <person name="Mau B."/>
            <person name="Shao Y."/>
        </authorList>
    </citation>
    <scope>NUCLEOTIDE SEQUENCE [LARGE SCALE GENOMIC DNA]</scope>
    <source>
        <strain>K12 / MG1655 / ATCC 47076</strain>
    </source>
</reference>
<reference key="4">
    <citation type="journal article" date="2006" name="Mol. Syst. Biol.">
        <title>Highly accurate genome sequences of Escherichia coli K-12 strains MG1655 and W3110.</title>
        <authorList>
            <person name="Hayashi K."/>
            <person name="Morooka N."/>
            <person name="Yamamoto Y."/>
            <person name="Fujita K."/>
            <person name="Isono K."/>
            <person name="Choi S."/>
            <person name="Ohtsubo E."/>
            <person name="Baba T."/>
            <person name="Wanner B.L."/>
            <person name="Mori H."/>
            <person name="Horiuchi T."/>
        </authorList>
    </citation>
    <scope>NUCLEOTIDE SEQUENCE [LARGE SCALE GENOMIC DNA]</scope>
    <source>
        <strain>K12 / W3110 / ATCC 27325 / DSM 5911</strain>
    </source>
</reference>
<reference key="5">
    <citation type="journal article" date="1994" name="Microbiology">
        <title>Inhibition of lipid biosynthesis induces the expression of the pspA gene.</title>
        <authorList>
            <person name="Bergler H."/>
            <person name="Abraham D."/>
            <person name="Aschauer H."/>
            <person name="Turnowsky F."/>
        </authorList>
    </citation>
    <scope>PARTIAL PROTEIN SEQUENCE</scope>
</reference>
<reference key="6">
    <citation type="journal article" date="1998" name="Microbiology">
        <title>Appearance of a stress-response protein, phage-shock protein A, in Escherichia coli exposed to hydrophobic organic solvents.</title>
        <authorList>
            <person name="Kobayashi H."/>
            <person name="Yamamoto M."/>
            <person name="Aono R."/>
        </authorList>
    </citation>
    <scope>PROTEIN SEQUENCE OF 2-20</scope>
    <source>
        <strain>K12 / JA300 / ATCC 33588 / DSM 4776 / NCIMB 12220</strain>
    </source>
</reference>
<reference key="7">
    <citation type="journal article" date="1996" name="EMBO J.">
        <title>Involvement of stress protein PspA (phage shock protein A) of Escherichia coli in maintenance of the protonmotive force under stress conditions.</title>
        <authorList>
            <person name="Kleerebezem M."/>
            <person name="Crielaard W."/>
            <person name="Tommassen J."/>
        </authorList>
    </citation>
    <scope>FUNCTION</scope>
</reference>
<reference key="8">
    <citation type="journal article" date="1997" name="Electrophoresis">
        <title>Escherichia coli proteome analysis using the gene-protein database.</title>
        <authorList>
            <person name="VanBogelen R.A."/>
            <person name="Abshire K.Z."/>
            <person name="Moldover B."/>
            <person name="Olson E.R."/>
            <person name="Neidhardt F.C."/>
        </authorList>
    </citation>
    <scope>IDENTIFICATION BY 2D-GEL</scope>
</reference>
<reference key="9">
    <citation type="journal article" date="2000" name="J. Bacteriol.">
        <title>The PspA protein of Escherichia coli is a negative regulator of sigma(54)-dependent transcription.</title>
        <authorList>
            <person name="Dworkin J."/>
            <person name="Jovanovic G."/>
            <person name="Model P."/>
        </authorList>
    </citation>
    <scope>FUNCTION</scope>
</reference>
<reference key="10">
    <citation type="journal article" date="2003" name="J. Bacteriol.">
        <title>Interactions between phage-shock proteins in Escherichia coli.</title>
        <authorList>
            <person name="Adams H."/>
            <person name="Teertstra W."/>
            <person name="Demmers J."/>
            <person name="Boesten R."/>
            <person name="Tommassen J."/>
        </authorList>
    </citation>
    <scope>INTERACTION WITH PSPB AND PSPC</scope>
    <source>
        <strain>K12</strain>
    </source>
</reference>
<reference key="11">
    <citation type="journal article" date="2004" name="J. Biol. Chem.">
        <title>Organization of the AAA(+) adaptor protein PspA is an oligomeric ring.</title>
        <authorList>
            <person name="Hankamer B.D."/>
            <person name="Elderkin S.L."/>
            <person name="Buck M."/>
            <person name="Nield J."/>
        </authorList>
    </citation>
    <scope>SUBUNIT</scope>
</reference>
<reference key="12">
    <citation type="journal article" date="2004" name="J. Biol. Chem.">
        <title>Identification of a new member of the phage shock protein response in Escherichia coli, the phage shock protein G (PspG).</title>
        <authorList>
            <person name="Lloyd L.J."/>
            <person name="Jones S.E."/>
            <person name="Jovanovic G."/>
            <person name="Gyaneshwar P."/>
            <person name="Rolfe M.D."/>
            <person name="Thompson A."/>
            <person name="Hinton J.C."/>
            <person name="Buck M."/>
        </authorList>
    </citation>
    <scope>FUNCTION</scope>
    <source>
        <strain>K12 / MG1655 / ATCC 47076</strain>
    </source>
</reference>
<reference key="13">
    <citation type="journal article" date="2009" name="J. Bacteriol.">
        <title>Contact-dependent growth inhibition causes reversible metabolic downregulation in Escherichia coli.</title>
        <authorList>
            <person name="Aoki S.K."/>
            <person name="Webb J.S."/>
            <person name="Braaten B.A."/>
            <person name="Low D.A."/>
        </authorList>
    </citation>
    <scope>INDUCTION BY CDI</scope>
    <scope>DISRUPTION PHENOTYPE</scope>
    <source>
        <strain>K12 / MC1061 / ATCC 53338 / DSM 7140</strain>
    </source>
</reference>
<reference key="14">
    <citation type="journal article" date="2009" name="J. Mol. Biol.">
        <title>A lower-order oligomer form of phage shock protein A (PspA) stably associates with the hexameric AAA(+) transcription activator protein PspF for negative regulation.</title>
        <authorList>
            <person name="Joly N."/>
            <person name="Burrows P.C."/>
            <person name="Engl C."/>
            <person name="Jovanovic G."/>
            <person name="Buck M."/>
        </authorList>
    </citation>
    <scope>FUNCTION</scope>
    <scope>SUBUNIT</scope>
    <scope>INTERACTION WITH PSPF</scope>
    <scope>DOMAIN</scope>
</reference>
<reference key="15">
    <citation type="journal article" date="2009" name="Mol. Microbiol.">
        <title>In vivo localizations of membrane stress controllers PspA and PspG in Escherichia coli.</title>
        <authorList>
            <person name="Engl C."/>
            <person name="Jovanovic G."/>
            <person name="Lloyd L.J."/>
            <person name="Murray H."/>
            <person name="Spitaler M."/>
            <person name="Ying L."/>
            <person name="Errington J."/>
            <person name="Buck M."/>
        </authorList>
    </citation>
    <scope>SUBCELLULAR LOCATION</scope>
    <source>
        <strain>K12 / MG1655 / ATCC 47076</strain>
    </source>
</reference>
<keyword id="KW-0002">3D-structure</keyword>
<keyword id="KW-0997">Cell inner membrane</keyword>
<keyword id="KW-1003">Cell membrane</keyword>
<keyword id="KW-0175">Coiled coil</keyword>
<keyword id="KW-0963">Cytoplasm</keyword>
<keyword id="KW-0903">Direct protein sequencing</keyword>
<keyword id="KW-0472">Membrane</keyword>
<keyword id="KW-1185">Reference proteome</keyword>
<keyword id="KW-0346">Stress response</keyword>
<name>PSPA_ECOLI</name>
<evidence type="ECO:0000255" key="1"/>
<evidence type="ECO:0000269" key="2">
    <source>
    </source>
</evidence>
<evidence type="ECO:0000269" key="3">
    <source>
    </source>
</evidence>
<evidence type="ECO:0000269" key="4">
    <source>
    </source>
</evidence>
<evidence type="ECO:0000269" key="5">
    <source>
    </source>
</evidence>
<evidence type="ECO:0000269" key="6">
    <source>
    </source>
</evidence>
<evidence type="ECO:0000269" key="7">
    <source>
    </source>
</evidence>
<evidence type="ECO:0000269" key="8">
    <source>
    </source>
</evidence>
<evidence type="ECO:0000269" key="9">
    <source>
    </source>
</evidence>
<evidence type="ECO:0000269" key="10">
    <source>
    </source>
</evidence>
<evidence type="ECO:0000269" key="11">
    <source>
    </source>
</evidence>
<evidence type="ECO:0000305" key="12"/>
<evidence type="ECO:0007829" key="13">
    <source>
        <dbReference type="PDB" id="4WHE"/>
    </source>
</evidence>
<dbReference type="EMBL" id="X57560">
    <property type="protein sequence ID" value="CAA40789.1"/>
    <property type="molecule type" value="Genomic_DNA"/>
</dbReference>
<dbReference type="EMBL" id="U00096">
    <property type="protein sequence ID" value="AAC74386.1"/>
    <property type="molecule type" value="Genomic_DNA"/>
</dbReference>
<dbReference type="EMBL" id="AP009048">
    <property type="protein sequence ID" value="BAA14873.1"/>
    <property type="molecule type" value="Genomic_DNA"/>
</dbReference>
<dbReference type="PIR" id="C64879">
    <property type="entry name" value="C64879"/>
</dbReference>
<dbReference type="RefSeq" id="NP_415820.1">
    <property type="nucleotide sequence ID" value="NC_000913.3"/>
</dbReference>
<dbReference type="RefSeq" id="WP_000511025.1">
    <property type="nucleotide sequence ID" value="NZ_SSZK01000012.1"/>
</dbReference>
<dbReference type="PDB" id="4WHE">
    <property type="method" value="X-ray"/>
    <property type="resolution" value="1.80 A"/>
    <property type="chains" value="A=1-144"/>
</dbReference>
<dbReference type="PDBsum" id="4WHE"/>
<dbReference type="SMR" id="P0AFM6"/>
<dbReference type="BioGRID" id="4262874">
    <property type="interactions" value="313"/>
</dbReference>
<dbReference type="ComplexPortal" id="CPX-5745">
    <property type="entry name" value="pspAF transcription regulation complex"/>
</dbReference>
<dbReference type="DIP" id="DIP-10587N"/>
<dbReference type="FunCoup" id="P0AFM6">
    <property type="interactions" value="347"/>
</dbReference>
<dbReference type="IntAct" id="P0AFM6">
    <property type="interactions" value="6"/>
</dbReference>
<dbReference type="STRING" id="511145.b1304"/>
<dbReference type="jPOST" id="P0AFM6"/>
<dbReference type="PaxDb" id="511145-b1304"/>
<dbReference type="EnsemblBacteria" id="AAC74386">
    <property type="protein sequence ID" value="AAC74386"/>
    <property type="gene ID" value="b1304"/>
</dbReference>
<dbReference type="GeneID" id="93775430"/>
<dbReference type="GeneID" id="945887"/>
<dbReference type="KEGG" id="ecj:JW1297"/>
<dbReference type="KEGG" id="eco:b1304"/>
<dbReference type="KEGG" id="ecoc:C3026_07650"/>
<dbReference type="PATRIC" id="fig|1411691.4.peg.975"/>
<dbReference type="EchoBASE" id="EB0769"/>
<dbReference type="eggNOG" id="COG1842">
    <property type="taxonomic scope" value="Bacteria"/>
</dbReference>
<dbReference type="HOGENOM" id="CLU_056466_3_0_6"/>
<dbReference type="InParanoid" id="P0AFM6"/>
<dbReference type="OMA" id="MIFRAKA"/>
<dbReference type="OrthoDB" id="9779630at2"/>
<dbReference type="PhylomeDB" id="P0AFM6"/>
<dbReference type="BioCyc" id="EcoCyc:EG10776-MONOMER"/>
<dbReference type="EvolutionaryTrace" id="P0AFM6"/>
<dbReference type="PRO" id="PR:P0AFM6"/>
<dbReference type="Proteomes" id="UP000000625">
    <property type="component" value="Chromosome"/>
</dbReference>
<dbReference type="GO" id="GO:0060187">
    <property type="term" value="C:cell pole"/>
    <property type="evidence" value="ECO:0000314"/>
    <property type="project" value="EcoCyc"/>
</dbReference>
<dbReference type="GO" id="GO:0005829">
    <property type="term" value="C:cytosol"/>
    <property type="evidence" value="ECO:0000314"/>
    <property type="project" value="EcoCyc"/>
</dbReference>
<dbReference type="GO" id="GO:0005886">
    <property type="term" value="C:plasma membrane"/>
    <property type="evidence" value="ECO:0007669"/>
    <property type="project" value="UniProtKB-SubCell"/>
</dbReference>
<dbReference type="GO" id="GO:0005667">
    <property type="term" value="C:transcription regulator complex"/>
    <property type="evidence" value="ECO:0000353"/>
    <property type="project" value="ComplexPortal"/>
</dbReference>
<dbReference type="GO" id="GO:0042802">
    <property type="term" value="F:identical protein binding"/>
    <property type="evidence" value="ECO:0000314"/>
    <property type="project" value="EcoCyc"/>
</dbReference>
<dbReference type="GO" id="GO:0005543">
    <property type="term" value="F:phospholipid binding"/>
    <property type="evidence" value="ECO:0000314"/>
    <property type="project" value="EcoCyc"/>
</dbReference>
<dbReference type="GO" id="GO:0009271">
    <property type="term" value="P:phage shock"/>
    <property type="evidence" value="ECO:0000270"/>
    <property type="project" value="EcoliWiki"/>
</dbReference>
<dbReference type="GO" id="GO:0080135">
    <property type="term" value="P:regulation of cellular response to stress"/>
    <property type="evidence" value="ECO:0000303"/>
    <property type="project" value="ComplexPortal"/>
</dbReference>
<dbReference type="GO" id="GO:0006355">
    <property type="term" value="P:regulation of DNA-templated transcription"/>
    <property type="evidence" value="ECO:0000314"/>
    <property type="project" value="ComplexPortal"/>
</dbReference>
<dbReference type="GO" id="GO:0009408">
    <property type="term" value="P:response to heat"/>
    <property type="evidence" value="ECO:0000270"/>
    <property type="project" value="EcoliWiki"/>
</dbReference>
<dbReference type="InterPro" id="IPR014319">
    <property type="entry name" value="Phageshock_PspA"/>
</dbReference>
<dbReference type="InterPro" id="IPR007157">
    <property type="entry name" value="PspA_VIPP1"/>
</dbReference>
<dbReference type="NCBIfam" id="TIGR02977">
    <property type="entry name" value="phageshock_pspA"/>
    <property type="match status" value="1"/>
</dbReference>
<dbReference type="NCBIfam" id="NF007974">
    <property type="entry name" value="PRK10698.1"/>
    <property type="match status" value="1"/>
</dbReference>
<dbReference type="PANTHER" id="PTHR31088">
    <property type="entry name" value="MEMBRANE-ASSOCIATED PROTEIN VIPP1, CHLOROPLASTIC"/>
    <property type="match status" value="1"/>
</dbReference>
<dbReference type="PANTHER" id="PTHR31088:SF6">
    <property type="entry name" value="PHAGE SHOCK PROTEIN A"/>
    <property type="match status" value="1"/>
</dbReference>
<dbReference type="Pfam" id="PF04012">
    <property type="entry name" value="PspA_IM30"/>
    <property type="match status" value="1"/>
</dbReference>
<sequence length="222" mass="25493">MGIFSRFADIVNANINALLEKAEDPQKLVRLMIQEMEDTLVEVRSTSARALAEKKQLTRRIEQASAREVEWQEKAELALLKEREDLARAALIEKQKLTDLIKSLEHEVTLVDDTLARMKKEIGELENKLSETRARQQALMLRHQAANSSRDVRRQLDSGKLDEAMARFESFERRIDQMEAEAESHSFGKQKSLDDQFAELKADDAISEQLAQLKAKMKQDNQ</sequence>
<feature type="initiator methionine" description="Removed" evidence="11">
    <location>
        <position position="1"/>
    </location>
</feature>
<feature type="chain" id="PRO_0000166292" description="Phage shock protein A">
    <location>
        <begin position="2"/>
        <end position="222"/>
    </location>
</feature>
<feature type="coiled-coil region" evidence="1">
    <location>
        <begin position="30"/>
        <end position="187"/>
    </location>
</feature>
<feature type="coiled-coil region" evidence="1">
    <location>
        <begin position="204"/>
        <end position="222"/>
    </location>
</feature>
<feature type="sequence conflict" description="In Ref. 1; CAA40789." evidence="12" ref="1">
    <original>A</original>
    <variation>R</variation>
    <location>
        <position position="182"/>
    </location>
</feature>
<feature type="helix" evidence="13">
    <location>
        <begin position="7"/>
        <end position="11"/>
    </location>
</feature>
<feature type="helix" evidence="13">
    <location>
        <begin position="25"/>
        <end position="80"/>
    </location>
</feature>
<feature type="helix" evidence="13">
    <location>
        <begin position="84"/>
        <end position="141"/>
    </location>
</feature>
<accession>P0AFM6</accession>
<accession>P23853</accession>
<accession>P76040</accession>
<accession>P77363</accession>
<organism>
    <name type="scientific">Escherichia coli (strain K12)</name>
    <dbReference type="NCBI Taxonomy" id="83333"/>
    <lineage>
        <taxon>Bacteria</taxon>
        <taxon>Pseudomonadati</taxon>
        <taxon>Pseudomonadota</taxon>
        <taxon>Gammaproteobacteria</taxon>
        <taxon>Enterobacterales</taxon>
        <taxon>Enterobacteriaceae</taxon>
        <taxon>Escherichia</taxon>
    </lineage>
</organism>
<protein>
    <recommendedName>
        <fullName>Phage shock protein A</fullName>
    </recommendedName>
</protein>